<accession>Q8WP92</accession>
<keyword id="KW-0085">Behavior</keyword>
<keyword id="KW-1015">Disulfide bond</keyword>
<keyword id="KW-0589">Pheromone response</keyword>
<keyword id="KW-0590">Pheromone-binding</keyword>
<keyword id="KW-0964">Secreted</keyword>
<keyword id="KW-0732">Signal</keyword>
<keyword id="KW-0813">Transport</keyword>
<evidence type="ECO:0000250" key="1"/>
<evidence type="ECO:0000250" key="2">
    <source>
        <dbReference type="UniProtKB" id="P20797"/>
    </source>
</evidence>
<evidence type="ECO:0000250" key="3">
    <source>
        <dbReference type="UniProtKB" id="Q8WP90"/>
    </source>
</evidence>
<evidence type="ECO:0000255" key="4"/>
<evidence type="ECO:0000312" key="5">
    <source>
        <dbReference type="EMBL" id="AAL51115.1"/>
    </source>
</evidence>
<organism>
    <name type="scientific">Solenopsis amblychila</name>
    <name type="common">Desert fire ant</name>
    <dbReference type="NCBI Taxonomy" id="176590"/>
    <lineage>
        <taxon>Eukaryota</taxon>
        <taxon>Metazoa</taxon>
        <taxon>Ecdysozoa</taxon>
        <taxon>Arthropoda</taxon>
        <taxon>Hexapoda</taxon>
        <taxon>Insecta</taxon>
        <taxon>Pterygota</taxon>
        <taxon>Neoptera</taxon>
        <taxon>Endopterygota</taxon>
        <taxon>Hymenoptera</taxon>
        <taxon>Apocrita</taxon>
        <taxon>Aculeata</taxon>
        <taxon>Formicoidea</taxon>
        <taxon>Formicidae</taxon>
        <taxon>Myrmicinae</taxon>
        <taxon>Solenopsis</taxon>
    </lineage>
</organism>
<proteinExistence type="inferred from homology"/>
<name>PBGP9_SOLAM</name>
<feature type="signal peptide" evidence="3">
    <location>
        <begin position="1"/>
        <end position="19"/>
    </location>
</feature>
<feature type="chain" id="PRO_5000061685" description="Pheromone-binding protein Gp-9" evidence="3">
    <location>
        <begin position="20"/>
        <end position="153"/>
    </location>
</feature>
<feature type="disulfide bond" evidence="2">
    <location>
        <begin position="37"/>
        <end position="77"/>
    </location>
</feature>
<feature type="disulfide bond" evidence="2">
    <location>
        <begin position="73"/>
        <end position="129"/>
    </location>
</feature>
<feature type="disulfide bond" evidence="2">
    <location>
        <begin position="118"/>
        <end position="138"/>
    </location>
</feature>
<protein>
    <recommendedName>
        <fullName>Pheromone-binding protein Gp-9</fullName>
        <shortName>PBP</shortName>
    </recommendedName>
    <alternativeName>
        <fullName>Putative odorant-binding protein Gp-9</fullName>
    </alternativeName>
</protein>
<gene>
    <name evidence="5" type="primary">Gp-9</name>
</gene>
<reference evidence="5" key="1">
    <citation type="journal article" date="2002" name="Science">
        <title>Identification of a major gene regulating complex social behavior.</title>
        <authorList>
            <person name="Krieger M.J.B."/>
            <person name="Ross K.G."/>
        </authorList>
    </citation>
    <scope>NUCLEOTIDE SEQUENCE [GENOMIC DNA]</scope>
</reference>
<sequence>MKTFVLHIFIFAFVAFASASRDSAKKIGSQYDNYETCLTEHGLTDDDIFSIGEVSSGQHKTNHEDTELHKNGCVMQCMLEKDGLMSGADYDEEKMREDYIKETGAQPGDQRIEALNTCMQETKDMEDKCDKSLILVACVLAAEAVLADSSEGA</sequence>
<dbReference type="EMBL" id="AF427889">
    <property type="protein sequence ID" value="AAL51115.1"/>
    <property type="molecule type" value="Genomic_DNA"/>
</dbReference>
<dbReference type="SMR" id="Q8WP92"/>
<dbReference type="GO" id="GO:0005615">
    <property type="term" value="C:extracellular space"/>
    <property type="evidence" value="ECO:0000250"/>
    <property type="project" value="UniProtKB"/>
</dbReference>
<dbReference type="GO" id="GO:0005550">
    <property type="term" value="F:pheromone binding"/>
    <property type="evidence" value="ECO:0007669"/>
    <property type="project" value="UniProtKB-KW"/>
</dbReference>
<dbReference type="GO" id="GO:0019236">
    <property type="term" value="P:response to pheromone"/>
    <property type="evidence" value="ECO:0007669"/>
    <property type="project" value="UniProtKB-KW"/>
</dbReference>
<dbReference type="GO" id="GO:0035176">
    <property type="term" value="P:social behavior"/>
    <property type="evidence" value="ECO:0000250"/>
    <property type="project" value="UniProtKB"/>
</dbReference>
<dbReference type="CDD" id="cd23992">
    <property type="entry name" value="PBP_GOBP"/>
    <property type="match status" value="1"/>
</dbReference>
<dbReference type="FunFam" id="1.10.238.20:FF:000004">
    <property type="entry name" value="Pheromone-binding protein Gp-9"/>
    <property type="match status" value="1"/>
</dbReference>
<dbReference type="Gene3D" id="1.10.238.20">
    <property type="entry name" value="Pheromone/general odorant binding protein domain"/>
    <property type="match status" value="1"/>
</dbReference>
<dbReference type="InterPro" id="IPR006170">
    <property type="entry name" value="PBP/GOBP"/>
</dbReference>
<dbReference type="InterPro" id="IPR036728">
    <property type="entry name" value="PBP_GOBP_sf"/>
</dbReference>
<dbReference type="InterPro" id="IPR022354">
    <property type="entry name" value="Pheromone-bd_protein_Gp-9"/>
</dbReference>
<dbReference type="Pfam" id="PF01395">
    <property type="entry name" value="PBP_GOBP"/>
    <property type="match status" value="1"/>
</dbReference>
<dbReference type="PRINTS" id="PR02007">
    <property type="entry name" value="ODORANTBPGP9"/>
</dbReference>
<dbReference type="SUPFAM" id="SSF47565">
    <property type="entry name" value="Insect pheromone/odorant-binding proteins"/>
    <property type="match status" value="1"/>
</dbReference>
<comment type="function">
    <text evidence="3">Colony queen number, a major feature of social organization, is associated with worker genotype for Gp-9. Colonies are headed by either a single reproductive queen (monogyne form) or multiple queens (polygyne form). Differences in worker Gp-9 genotypes between social forms may cause differences in workers' abilities to recognize queens and regulate their numbers (By similarity).</text>
</comment>
<comment type="subunit">
    <text evidence="2">Homodimer.</text>
</comment>
<comment type="subcellular location">
    <subcellularLocation>
        <location evidence="1">Secreted</location>
    </subcellularLocation>
</comment>
<comment type="similarity">
    <text evidence="4">Belongs to the PBP/GOBP family.</text>
</comment>